<sequence length="605" mass="67579">MPSLKDWVVAGLVPMTIASSTSRLPSNCTNGPSSRRCWQDGFDIWSDYTDPKVAPPGKLVEYDLTVTQVTISPDGYERLGTVFNGQYPGPLIEADWGDTLRITVHNNLTNGNGTAVHWHGIRLFETNWIDGVPGVTQCPIPPGESQVYEFRATQYGTSWYHSHFSLQYSNGLYGPLVIHGPSSSDWDVDLGPWTLTDWYHEDAFTLNWISLAGQLAPIPVSTLLNGKGTYDCDPGLDPACTGKQEYFETTFQQGTKYKMAIVNTATLLTYTFWIDGHNFTVIEADFVPVEPYSTNVLNVGMGQRYEIVVEANADRTQGSSFWIHAHYCDIPDVIPNNKVGIIRYDESDTSEPATPPLSEQHRDFGCSDPSLGDLVPVVKKTVGPRVNQIGPHDYLTIGEQGKIPTPWEKDPRVHLWTIKNTAMYVDWQTPSLEKLTADHDEEFPPETVPVTLDFDTGEWVYFLLTSNYSLEDVVTPRNLTPSVHPIHLHGHDFAILAQGKGPFTPDIAPQLDNPPRRDVVDVDIGGYAWIAFEVDNPGAWLLHCHLQYHASEGMALQYIEQPSKIKPLIENAGVLNDFGNRCASWKRYYNAVDIPNDRPQDDSGI</sequence>
<comment type="function">
    <text evidence="4 5 6 7 8 9 10">Dihydrogeodin oxidase; part of the gene cluster that mediates the biosynthesis of geodin, an intermediate in the biosynthesis of other natural products (PubMed:19549600, PubMed:24009710, PubMed:7665560). The pathway begins with the synthesis of atrochrysone thioester by the polyketide synthase (PKS) gedC (PubMed:12536215, PubMed:19549600). The atrochrysone carboxyl ACP thioesterase gedB then breaks the thioester bond and releases the atrochrysone carboxylic acid from gedC (PubMed:19549600). The atrochrysone carboxylic acid is then converted to atrochrysone which is further transformed into emodinanthrone (PubMed:24009710). The next step is performed by the emodinanthrone oxygenase gedH that catalyzes the oxidation of emodinanthrone to emodin (PubMed:1810248). Emodin O-methyltransferase encoded probably by gedA then catalyzes methylation of the 8-hydroxy group of emodin to form questin (PubMed:1444712). Ring cleavage of questin by questin oxidase gedK leads to desmethylsulochrin via several intermediates including questin epoxide (PubMed:3182756). Another methylation step probably catalyzed by methyltransferase gedG leads to the formation of sulochrin which is further converted to dihydrogeodin by the sulochrin halogenase gedL (PubMed:24009710). Finally, the dihydrogeodin oxidase gedJ catalyzes the stereospecific phenol oxidative coupling reaction converting dihydrogeodin to geodin (PubMed:7665560).</text>
</comment>
<comment type="catalytic activity">
    <reaction evidence="10">
        <text>2 dihydrogeodin + O2 + 2 H(+) = 2 (+)-geodin + 2 H2O</text>
        <dbReference type="Rhea" id="RHEA:64316"/>
        <dbReference type="ChEBI" id="CHEBI:15377"/>
        <dbReference type="ChEBI" id="CHEBI:15378"/>
        <dbReference type="ChEBI" id="CHEBI:15379"/>
        <dbReference type="ChEBI" id="CHEBI:150012"/>
        <dbReference type="ChEBI" id="CHEBI:150868"/>
    </reaction>
    <physiologicalReaction direction="left-to-right" evidence="10">
        <dbReference type="Rhea" id="RHEA:64317"/>
    </physiologicalReaction>
</comment>
<comment type="cofactor">
    <cofactor evidence="1">
        <name>Cu cation</name>
        <dbReference type="ChEBI" id="CHEBI:23378"/>
    </cofactor>
    <text evidence="1">Binds 4 Cu cations per monomer.</text>
</comment>
<comment type="pathway">
    <text evidence="8">Secondary metabolite biosynthesis.</text>
</comment>
<comment type="similarity">
    <text evidence="13">Belongs to the multicopper oxidase family.</text>
</comment>
<gene>
    <name evidence="11" type="primary">gedJ</name>
    <name type="ORF">ATEG_08458</name>
</gene>
<proteinExistence type="evidence at protein level"/>
<name>GEDJ_ASPTN</name>
<reference key="1">
    <citation type="submission" date="2005-09" db="EMBL/GenBank/DDBJ databases">
        <title>Annotation of the Aspergillus terreus NIH2624 genome.</title>
        <authorList>
            <person name="Birren B.W."/>
            <person name="Lander E.S."/>
            <person name="Galagan J.E."/>
            <person name="Nusbaum C."/>
            <person name="Devon K."/>
            <person name="Henn M."/>
            <person name="Ma L.-J."/>
            <person name="Jaffe D.B."/>
            <person name="Butler J."/>
            <person name="Alvarez P."/>
            <person name="Gnerre S."/>
            <person name="Grabherr M."/>
            <person name="Kleber M."/>
            <person name="Mauceli E.W."/>
            <person name="Brockman W."/>
            <person name="Rounsley S."/>
            <person name="Young S.K."/>
            <person name="LaButti K."/>
            <person name="Pushparaj V."/>
            <person name="DeCaprio D."/>
            <person name="Crawford M."/>
            <person name="Koehrsen M."/>
            <person name="Engels R."/>
            <person name="Montgomery P."/>
            <person name="Pearson M."/>
            <person name="Howarth C."/>
            <person name="Larson L."/>
            <person name="Luoma S."/>
            <person name="White J."/>
            <person name="Alvarado L."/>
            <person name="Kodira C.D."/>
            <person name="Zeng Q."/>
            <person name="Oleary S."/>
            <person name="Yandava C."/>
            <person name="Denning D.W."/>
            <person name="Nierman W.C."/>
            <person name="Milne T."/>
            <person name="Madden K."/>
        </authorList>
    </citation>
    <scope>NUCLEOTIDE SEQUENCE [LARGE SCALE GENOMIC DNA]</scope>
    <source>
        <strain>NIH 2624 / FGSC A1156</strain>
    </source>
</reference>
<reference key="2">
    <citation type="journal article" date="1991" name="Biochem. Int.">
        <title>Identification of emodinanthrone oxygenase in fungus Aspergillus terreus.</title>
        <authorList>
            <person name="Fujii I."/>
            <person name="Chen Z.G."/>
            <person name="Ebizuka Y."/>
            <person name="Sankawa U."/>
        </authorList>
    </citation>
    <scope>FUNCTION</scope>
</reference>
<reference key="3">
    <citation type="journal article" date="1992" name="Arch. Microbiol.">
        <title>Emodin O-methyltransferase from Aspergillus terreus.</title>
        <authorList>
            <person name="Chen Z.G."/>
            <person name="Fujii I."/>
            <person name="Ebizuka Y."/>
            <person name="Sankawa U."/>
        </authorList>
    </citation>
    <scope>FUNCTION</scope>
</reference>
<reference key="4">
    <citation type="journal article" date="1995" name="J. Biol. Chem.">
        <title>Molecular cloning and heterologous expression of the gene encoding dihydrogeodin oxidase, a multicopper blue enzyme from Aspergillus terreus.</title>
        <authorList>
            <person name="Huang K.X."/>
            <person name="Fujii I."/>
            <person name="Ebizuka Y."/>
            <person name="Gomi K."/>
            <person name="Sankawa U."/>
        </authorList>
    </citation>
    <scope>FUNCTION</scope>
    <scope>CATALYTIC ACTIVITY</scope>
</reference>
<reference key="5">
    <citation type="journal article" date="1988" name="J. Biochem.">
        <title>A novel anthraquinone ring cleavage enzyme from Aspergillus terreus.</title>
        <authorList>
            <person name="Fujii I."/>
            <person name="Ebizuka Y."/>
            <person name="Sankawa U."/>
        </authorList>
    </citation>
    <scope>FUNCTION</scope>
</reference>
<reference key="6">
    <citation type="journal article" date="2003" name="Nat. Biotechnol.">
        <title>Integrating transcriptional and metabolite profiles to direct the engineering of lovastatin-producing fungal strains.</title>
        <authorList>
            <person name="Askenazi M."/>
            <person name="Driggers E.M."/>
            <person name="Holtzman D.A."/>
            <person name="Norman T.C."/>
            <person name="Iverson S."/>
            <person name="Zimmer D.P."/>
            <person name="Boers M.E."/>
            <person name="Blomquist P.R."/>
            <person name="Martinez E.J."/>
            <person name="Monreal A.W."/>
            <person name="Feibelman T.P."/>
            <person name="Mayorga M.E."/>
            <person name="Maxon M.E."/>
            <person name="Sykes K."/>
            <person name="Tobin J.V."/>
            <person name="Cordero E."/>
            <person name="Salama S.R."/>
            <person name="Trueheart J."/>
            <person name="Royer J.C."/>
            <person name="Madden K.T."/>
        </authorList>
    </citation>
    <scope>FUNCTION</scope>
</reference>
<reference key="7">
    <citation type="journal article" date="2009" name="Chem. Biol.">
        <title>Physically discrete beta-lactamase-type thioesterase catalyzes product release in atrochrysone synthesis by iterative type I polyketide synthase.</title>
        <authorList>
            <person name="Awakawa T."/>
            <person name="Yokota K."/>
            <person name="Funa N."/>
            <person name="Doi F."/>
            <person name="Mori N."/>
            <person name="Watanabe H."/>
            <person name="Horinouchi S."/>
        </authorList>
    </citation>
    <scope>FUNCTION</scope>
</reference>
<reference key="8">
    <citation type="journal article" date="2013" name="PLoS ONE">
        <title>Heterologous reconstitution of the intact geodin gene cluster in Aspergillus nidulans through a simple and versatile PCR based approach.</title>
        <authorList>
            <person name="Nielsen M.T."/>
            <person name="Nielsen J.B."/>
            <person name="Anyaogu D.C."/>
            <person name="Holm D.K."/>
            <person name="Nielsen K.F."/>
            <person name="Larsen T.O."/>
            <person name="Mortensen U.H."/>
        </authorList>
    </citation>
    <scope>FUNCTION</scope>
</reference>
<feature type="signal peptide" evidence="2">
    <location>
        <begin position="1"/>
        <end position="18"/>
    </location>
</feature>
<feature type="chain" id="PRO_0000437103" description="Dihydrogeodin oxidase">
    <location>
        <begin position="19"/>
        <end position="605"/>
    </location>
</feature>
<feature type="domain" description="Plastocyanin-like 1" evidence="2">
    <location>
        <begin position="65"/>
        <end position="183"/>
    </location>
</feature>
<feature type="domain" description="Plastocyanin-like 2" evidence="2">
    <location>
        <begin position="189"/>
        <end position="347"/>
    </location>
</feature>
<feature type="domain" description="Plastocyanin-like 3" evidence="2">
    <location>
        <begin position="424"/>
        <end position="567"/>
    </location>
</feature>
<feature type="binding site" evidence="1">
    <location>
        <position position="117"/>
    </location>
    <ligand>
        <name>Cu cation</name>
        <dbReference type="ChEBI" id="CHEBI:23378"/>
        <label>1</label>
    </ligand>
</feature>
<feature type="binding site" evidence="1">
    <location>
        <position position="119"/>
    </location>
    <ligand>
        <name>Cu cation</name>
        <dbReference type="ChEBI" id="CHEBI:23378"/>
        <label>2</label>
    </ligand>
</feature>
<feature type="binding site" evidence="1">
    <location>
        <position position="161"/>
    </location>
    <ligand>
        <name>Cu cation</name>
        <dbReference type="ChEBI" id="CHEBI:23378"/>
        <label>2</label>
    </ligand>
</feature>
<feature type="binding site" evidence="1">
    <location>
        <position position="163"/>
    </location>
    <ligand>
        <name>Cu cation</name>
        <dbReference type="ChEBI" id="CHEBI:23378"/>
        <label>3</label>
    </ligand>
</feature>
<feature type="binding site" evidence="1">
    <location>
        <position position="484"/>
    </location>
    <ligand>
        <name>Cu cation</name>
        <dbReference type="ChEBI" id="CHEBI:23378"/>
        <label>4</label>
    </ligand>
</feature>
<feature type="binding site" evidence="1">
    <location>
        <position position="487"/>
    </location>
    <ligand>
        <name>Cu cation</name>
        <dbReference type="ChEBI" id="CHEBI:23378"/>
        <label>1</label>
    </ligand>
</feature>
<feature type="binding site" evidence="1">
    <location>
        <position position="489"/>
    </location>
    <ligand>
        <name>Cu cation</name>
        <dbReference type="ChEBI" id="CHEBI:23378"/>
        <label>3</label>
    </ligand>
</feature>
<feature type="binding site" evidence="1">
    <location>
        <position position="543"/>
    </location>
    <ligand>
        <name>Cu cation</name>
        <dbReference type="ChEBI" id="CHEBI:23378"/>
        <label>3</label>
    </ligand>
</feature>
<feature type="binding site" evidence="1">
    <location>
        <position position="544"/>
    </location>
    <ligand>
        <name>Cu cation</name>
        <dbReference type="ChEBI" id="CHEBI:23378"/>
        <label>4</label>
    </ligand>
</feature>
<feature type="binding site" evidence="1">
    <location>
        <position position="545"/>
    </location>
    <ligand>
        <name>Cu cation</name>
        <dbReference type="ChEBI" id="CHEBI:23378"/>
        <label>2</label>
    </ligand>
</feature>
<feature type="binding site" evidence="1">
    <location>
        <position position="549"/>
    </location>
    <ligand>
        <name>Cu cation</name>
        <dbReference type="ChEBI" id="CHEBI:23378"/>
        <label>4</label>
    </ligand>
</feature>
<feature type="glycosylation site" description="N-linked (GlcNAc...) asparagine" evidence="3">
    <location>
        <position position="27"/>
    </location>
</feature>
<feature type="glycosylation site" description="N-linked (GlcNAc...) asparagine" evidence="3">
    <location>
        <position position="107"/>
    </location>
</feature>
<feature type="glycosylation site" description="N-linked (GlcNAc...) asparagine" evidence="3">
    <location>
        <position position="112"/>
    </location>
</feature>
<feature type="glycosylation site" description="N-linked (GlcNAc...) asparagine" evidence="3">
    <location>
        <position position="278"/>
    </location>
</feature>
<feature type="glycosylation site" description="N-linked (GlcNAc...) asparagine" evidence="3">
    <location>
        <position position="467"/>
    </location>
</feature>
<accession>Q0CCX6</accession>
<keyword id="KW-0186">Copper</keyword>
<keyword id="KW-0325">Glycoprotein</keyword>
<keyword id="KW-0479">Metal-binding</keyword>
<keyword id="KW-0560">Oxidoreductase</keyword>
<keyword id="KW-1185">Reference proteome</keyword>
<keyword id="KW-0732">Signal</keyword>
<organism>
    <name type="scientific">Aspergillus terreus (strain NIH 2624 / FGSC A1156)</name>
    <dbReference type="NCBI Taxonomy" id="341663"/>
    <lineage>
        <taxon>Eukaryota</taxon>
        <taxon>Fungi</taxon>
        <taxon>Dikarya</taxon>
        <taxon>Ascomycota</taxon>
        <taxon>Pezizomycotina</taxon>
        <taxon>Eurotiomycetes</taxon>
        <taxon>Eurotiomycetidae</taxon>
        <taxon>Eurotiales</taxon>
        <taxon>Aspergillaceae</taxon>
        <taxon>Aspergillus</taxon>
        <taxon>Aspergillus subgen. Circumdati</taxon>
    </lineage>
</organism>
<protein>
    <recommendedName>
        <fullName evidence="12">Dihydrogeodin oxidase</fullName>
        <shortName evidence="12">DHGO</shortName>
        <ecNumber evidence="10">1.10.3.-</ecNumber>
    </recommendedName>
    <alternativeName>
        <fullName evidence="11">Geodin synthesis protein J</fullName>
    </alternativeName>
</protein>
<dbReference type="EC" id="1.10.3.-" evidence="10"/>
<dbReference type="EMBL" id="CH476605">
    <property type="protein sequence ID" value="EAU31631.1"/>
    <property type="molecule type" value="Genomic_DNA"/>
</dbReference>
<dbReference type="RefSeq" id="XP_001217597.1">
    <property type="nucleotide sequence ID" value="XM_001217596.1"/>
</dbReference>
<dbReference type="SMR" id="Q0CCX6"/>
<dbReference type="STRING" id="341663.Q0CCX6"/>
<dbReference type="GlyCosmos" id="Q0CCX6">
    <property type="glycosylation" value="5 sites, No reported glycans"/>
</dbReference>
<dbReference type="EnsemblFungi" id="EAU31631">
    <property type="protein sequence ID" value="EAU31631"/>
    <property type="gene ID" value="ATEG_08458"/>
</dbReference>
<dbReference type="GeneID" id="4353196"/>
<dbReference type="VEuPathDB" id="FungiDB:ATEG_08458"/>
<dbReference type="eggNOG" id="KOG1263">
    <property type="taxonomic scope" value="Eukaryota"/>
</dbReference>
<dbReference type="HOGENOM" id="CLU_006504_3_2_1"/>
<dbReference type="OMA" id="CKEGIVM"/>
<dbReference type="OrthoDB" id="2121828at2759"/>
<dbReference type="BioCyc" id="MetaCyc:MONOMER-17515"/>
<dbReference type="Proteomes" id="UP000007963">
    <property type="component" value="Unassembled WGS sequence"/>
</dbReference>
<dbReference type="GO" id="GO:0005507">
    <property type="term" value="F:copper ion binding"/>
    <property type="evidence" value="ECO:0007669"/>
    <property type="project" value="InterPro"/>
</dbReference>
<dbReference type="GO" id="GO:0016491">
    <property type="term" value="F:oxidoreductase activity"/>
    <property type="evidence" value="ECO:0007669"/>
    <property type="project" value="UniProtKB-KW"/>
</dbReference>
<dbReference type="CDD" id="cd13854">
    <property type="entry name" value="CuRO_1_MaLCC_like"/>
    <property type="match status" value="1"/>
</dbReference>
<dbReference type="CDD" id="cd13880">
    <property type="entry name" value="CuRO_2_MaLCC_like"/>
    <property type="match status" value="1"/>
</dbReference>
<dbReference type="CDD" id="cd13901">
    <property type="entry name" value="CuRO_3_MaLCC_like"/>
    <property type="match status" value="1"/>
</dbReference>
<dbReference type="FunFam" id="2.60.40.420:FF:000021">
    <property type="entry name" value="Extracellular dihydrogeodin oxidase/laccase"/>
    <property type="match status" value="1"/>
</dbReference>
<dbReference type="FunFam" id="2.60.40.420:FF:000045">
    <property type="entry name" value="Laccase 2"/>
    <property type="match status" value="1"/>
</dbReference>
<dbReference type="Gene3D" id="2.60.40.420">
    <property type="entry name" value="Cupredoxins - blue copper proteins"/>
    <property type="match status" value="3"/>
</dbReference>
<dbReference type="InterPro" id="IPR011707">
    <property type="entry name" value="Cu-oxidase-like_N"/>
</dbReference>
<dbReference type="InterPro" id="IPR001117">
    <property type="entry name" value="Cu-oxidase_2nd"/>
</dbReference>
<dbReference type="InterPro" id="IPR011706">
    <property type="entry name" value="Cu-oxidase_C"/>
</dbReference>
<dbReference type="InterPro" id="IPR045087">
    <property type="entry name" value="Cu-oxidase_fam"/>
</dbReference>
<dbReference type="InterPro" id="IPR033138">
    <property type="entry name" value="Cu_oxidase_CS"/>
</dbReference>
<dbReference type="InterPro" id="IPR002355">
    <property type="entry name" value="Cu_oxidase_Cu_BS"/>
</dbReference>
<dbReference type="InterPro" id="IPR008972">
    <property type="entry name" value="Cupredoxin"/>
</dbReference>
<dbReference type="PANTHER" id="PTHR11709">
    <property type="entry name" value="MULTI-COPPER OXIDASE"/>
    <property type="match status" value="1"/>
</dbReference>
<dbReference type="PANTHER" id="PTHR11709:SF71">
    <property type="entry name" value="OXIDOREDUCTASE TPCJ"/>
    <property type="match status" value="1"/>
</dbReference>
<dbReference type="Pfam" id="PF00394">
    <property type="entry name" value="Cu-oxidase"/>
    <property type="match status" value="1"/>
</dbReference>
<dbReference type="Pfam" id="PF07731">
    <property type="entry name" value="Cu-oxidase_2"/>
    <property type="match status" value="1"/>
</dbReference>
<dbReference type="Pfam" id="PF07732">
    <property type="entry name" value="Cu-oxidase_3"/>
    <property type="match status" value="1"/>
</dbReference>
<dbReference type="SUPFAM" id="SSF49503">
    <property type="entry name" value="Cupredoxins"/>
    <property type="match status" value="3"/>
</dbReference>
<dbReference type="PROSITE" id="PS00079">
    <property type="entry name" value="MULTICOPPER_OXIDASE1"/>
    <property type="match status" value="1"/>
</dbReference>
<dbReference type="PROSITE" id="PS00080">
    <property type="entry name" value="MULTICOPPER_OXIDASE2"/>
    <property type="match status" value="1"/>
</dbReference>
<evidence type="ECO:0000250" key="1">
    <source>
        <dbReference type="UniProtKB" id="Q70KY3"/>
    </source>
</evidence>
<evidence type="ECO:0000255" key="2"/>
<evidence type="ECO:0000255" key="3">
    <source>
        <dbReference type="PROSITE-ProRule" id="PRU00498"/>
    </source>
</evidence>
<evidence type="ECO:0000269" key="4">
    <source>
    </source>
</evidence>
<evidence type="ECO:0000269" key="5">
    <source>
    </source>
</evidence>
<evidence type="ECO:0000269" key="6">
    <source>
    </source>
</evidence>
<evidence type="ECO:0000269" key="7">
    <source>
    </source>
</evidence>
<evidence type="ECO:0000269" key="8">
    <source>
    </source>
</evidence>
<evidence type="ECO:0000269" key="9">
    <source>
    </source>
</evidence>
<evidence type="ECO:0000269" key="10">
    <source>
    </source>
</evidence>
<evidence type="ECO:0000303" key="11">
    <source>
    </source>
</evidence>
<evidence type="ECO:0000303" key="12">
    <source>
    </source>
</evidence>
<evidence type="ECO:0000305" key="13"/>